<protein>
    <recommendedName>
        <fullName evidence="3">Dynein axonemal assembly factor 10</fullName>
    </recommendedName>
    <alternativeName>
        <fullName>WD repeat-containing protein 92</fullName>
    </alternativeName>
</protein>
<reference key="1">
    <citation type="submission" date="2006-02" db="EMBL/GenBank/DDBJ databases">
        <authorList>
            <consortium name="NIH - Mammalian Gene Collection (MGC) project"/>
        </authorList>
    </citation>
    <scope>NUCLEOTIDE SEQUENCE [LARGE SCALE MRNA]</scope>
    <source>
        <strain>Hereford</strain>
        <tissue>Uterus</tissue>
    </source>
</reference>
<sequence>MSAFEKPQIISHIQKSLSYTVFDCKWMPCSAKFVTMGNFARGTGVIQLYEIQQGDLKLLREIEKAKPIKCGTFGATSLQQRYLATGDFAGNLHIWNLEAPEVPVYSVKGHKEIINTIDGVGGLGIGEGAPEIVTGSRDGTVKVWDPRQKDDPVANMEPVQGENKRDCWTVAFGNAYNQEERVVCAGYDNGDIKLFDLRNMSLRWETNIKNGVCSLEFDRKDISMNKLVATSLEGKFHVFDMRTQHPTKGFASVSEKAHKSTVWQVRHLPQNREVFLTAGGAGSLHLWKYEYPIQRSKKDSEGVEMGVAGSVSLLQNVTLSTQPVSSLDWSPDKRGLCICSSFDQMVRVLIVTKLHKI</sequence>
<gene>
    <name type="primary">DNAAF10</name>
    <name type="synonym">WDR92</name>
</gene>
<organism>
    <name type="scientific">Bos taurus</name>
    <name type="common">Bovine</name>
    <dbReference type="NCBI Taxonomy" id="9913"/>
    <lineage>
        <taxon>Eukaryota</taxon>
        <taxon>Metazoa</taxon>
        <taxon>Chordata</taxon>
        <taxon>Craniata</taxon>
        <taxon>Vertebrata</taxon>
        <taxon>Euteleostomi</taxon>
        <taxon>Mammalia</taxon>
        <taxon>Eutheria</taxon>
        <taxon>Laurasiatheria</taxon>
        <taxon>Artiodactyla</taxon>
        <taxon>Ruminantia</taxon>
        <taxon>Pecora</taxon>
        <taxon>Bovidae</taxon>
        <taxon>Bovinae</taxon>
        <taxon>Bos</taxon>
    </lineage>
</organism>
<comment type="function">
    <text evidence="1">Key assembly factor specifically required for the stability of axonemal dynein heavy chains in cytoplasm.</text>
</comment>
<comment type="subunit">
    <text evidence="1 2">Component of the PAQosome complex which is responsible for the biogenesis of several protein complexes and which consists of R2TP complex members RUVBL1, RUVBL2, RPAP3 and PIH1D1, URI complex members PFDN2, PFDN6, PDRG1, UXT and URI1 as well as ASDURF, POLR2E and DNAAF10/WDR92 (By similarity). Interacts with PIH1D1; the interaction associates DNAAF10 with the R2TP complex (By similarity). Interacts with several dynein axonemal assembly factors (By similarity).</text>
</comment>
<comment type="subcellular location">
    <subcellularLocation>
        <location evidence="1">Dynein axonemal particle</location>
    </subcellularLocation>
</comment>
<proteinExistence type="evidence at transcript level"/>
<keyword id="KW-0053">Apoptosis</keyword>
<keyword id="KW-0963">Cytoplasm</keyword>
<keyword id="KW-1185">Reference proteome</keyword>
<keyword id="KW-0677">Repeat</keyword>
<keyword id="KW-0853">WD repeat</keyword>
<feature type="chain" id="PRO_0000301670" description="Dynein axonemal assembly factor 10">
    <location>
        <begin position="1"/>
        <end position="357"/>
    </location>
</feature>
<feature type="repeat" description="WD 1">
    <location>
        <begin position="63"/>
        <end position="105"/>
    </location>
</feature>
<feature type="repeat" description="WD 2">
    <location>
        <begin position="115"/>
        <end position="154"/>
    </location>
</feature>
<feature type="repeat" description="WD 3">
    <location>
        <begin position="162"/>
        <end position="205"/>
    </location>
</feature>
<feature type="repeat" description="WD 4">
    <location>
        <begin position="207"/>
        <end position="249"/>
    </location>
</feature>
<feature type="repeat" description="WD 5">
    <location>
        <begin position="257"/>
        <end position="297"/>
    </location>
</feature>
<feature type="repeat" description="WD 6">
    <location>
        <begin position="319"/>
        <end position="357"/>
    </location>
</feature>
<name>DAA10_BOVIN</name>
<accession>Q29RZ9</accession>
<evidence type="ECO:0000250" key="1">
    <source>
        <dbReference type="UniProtKB" id="A8J3F6"/>
    </source>
</evidence>
<evidence type="ECO:0000250" key="2">
    <source>
        <dbReference type="UniProtKB" id="Q96MX6"/>
    </source>
</evidence>
<evidence type="ECO:0000305" key="3"/>
<dbReference type="EMBL" id="BC113293">
    <property type="protein sequence ID" value="AAI13294.1"/>
    <property type="molecule type" value="mRNA"/>
</dbReference>
<dbReference type="RefSeq" id="NP_001039930.1">
    <property type="nucleotide sequence ID" value="NM_001046465.1"/>
</dbReference>
<dbReference type="SMR" id="Q29RZ9"/>
<dbReference type="FunCoup" id="Q29RZ9">
    <property type="interactions" value="2223"/>
</dbReference>
<dbReference type="STRING" id="9913.ENSBTAP00000014007"/>
<dbReference type="PaxDb" id="9913-ENSBTAP00000014007"/>
<dbReference type="Ensembl" id="ENSBTAT00000014007.4">
    <property type="protein sequence ID" value="ENSBTAP00000014007.3"/>
    <property type="gene ID" value="ENSBTAG00000010595.4"/>
</dbReference>
<dbReference type="GeneID" id="540032"/>
<dbReference type="KEGG" id="bta:540032"/>
<dbReference type="CTD" id="116143"/>
<dbReference type="VEuPathDB" id="HostDB:ENSBTAG00000010595"/>
<dbReference type="VGNC" id="VGNC:50103">
    <property type="gene designation" value="DNAAF10"/>
</dbReference>
<dbReference type="eggNOG" id="ENOG502QRKB">
    <property type="taxonomic scope" value="Eukaryota"/>
</dbReference>
<dbReference type="GeneTree" id="ENSGT00950000183091"/>
<dbReference type="HOGENOM" id="CLU_062543_0_0_1"/>
<dbReference type="InParanoid" id="Q29RZ9"/>
<dbReference type="OMA" id="CLWKYNY"/>
<dbReference type="OrthoDB" id="10248252at2759"/>
<dbReference type="TreeFam" id="TF351064"/>
<dbReference type="Proteomes" id="UP000009136">
    <property type="component" value="Chromosome 11"/>
</dbReference>
<dbReference type="Bgee" id="ENSBTAG00000010595">
    <property type="expression patterns" value="Expressed in caput epididymis and 105 other cell types or tissues"/>
</dbReference>
<dbReference type="GO" id="GO:0120293">
    <property type="term" value="C:dynein axonemal particle"/>
    <property type="evidence" value="ECO:0000250"/>
    <property type="project" value="UniProtKB"/>
</dbReference>
<dbReference type="GO" id="GO:1990062">
    <property type="term" value="C:RPAP3/R2TP/prefoldin-like complex"/>
    <property type="evidence" value="ECO:0007669"/>
    <property type="project" value="Ensembl"/>
</dbReference>
<dbReference type="GO" id="GO:0043130">
    <property type="term" value="F:ubiquitin binding"/>
    <property type="evidence" value="ECO:0000318"/>
    <property type="project" value="GO_Central"/>
</dbReference>
<dbReference type="GO" id="GO:0006915">
    <property type="term" value="P:apoptotic process"/>
    <property type="evidence" value="ECO:0007669"/>
    <property type="project" value="UniProtKB-KW"/>
</dbReference>
<dbReference type="GO" id="GO:0070286">
    <property type="term" value="P:axonemal dynein complex assembly"/>
    <property type="evidence" value="ECO:0000250"/>
    <property type="project" value="UniProtKB"/>
</dbReference>
<dbReference type="FunFam" id="2.130.10.10:FF:000258">
    <property type="entry name" value="WD repeat-containing protein 92"/>
    <property type="match status" value="1"/>
</dbReference>
<dbReference type="Gene3D" id="2.130.10.10">
    <property type="entry name" value="YVTN repeat-like/Quinoprotein amine dehydrogenase"/>
    <property type="match status" value="1"/>
</dbReference>
<dbReference type="InterPro" id="IPR015943">
    <property type="entry name" value="WD40/YVTN_repeat-like_dom_sf"/>
</dbReference>
<dbReference type="InterPro" id="IPR036322">
    <property type="entry name" value="WD40_repeat_dom_sf"/>
</dbReference>
<dbReference type="InterPro" id="IPR001680">
    <property type="entry name" value="WD40_rpt"/>
</dbReference>
<dbReference type="PANTHER" id="PTHR10971">
    <property type="entry name" value="MRNA EXPORT FACTOR AND BUB3"/>
    <property type="match status" value="1"/>
</dbReference>
<dbReference type="Pfam" id="PF00400">
    <property type="entry name" value="WD40"/>
    <property type="match status" value="2"/>
</dbReference>
<dbReference type="SMART" id="SM00320">
    <property type="entry name" value="WD40"/>
    <property type="match status" value="5"/>
</dbReference>
<dbReference type="SUPFAM" id="SSF50978">
    <property type="entry name" value="WD40 repeat-like"/>
    <property type="match status" value="1"/>
</dbReference>
<dbReference type="PROSITE" id="PS50082">
    <property type="entry name" value="WD_REPEATS_2"/>
    <property type="match status" value="1"/>
</dbReference>
<dbReference type="PROSITE" id="PS50294">
    <property type="entry name" value="WD_REPEATS_REGION"/>
    <property type="match status" value="1"/>
</dbReference>